<keyword id="KW-0053">Apoptosis</keyword>
<keyword id="KW-0378">Hydrolase</keyword>
<keyword id="KW-0539">Nucleus</keyword>
<keyword id="KW-0645">Protease</keyword>
<keyword id="KW-1185">Reference proteome</keyword>
<keyword id="KW-0788">Thiol protease</keyword>
<keyword id="KW-0833">Ubl conjugation pathway</keyword>
<accession>Q6NX27</accession>
<feature type="chain" id="PRO_0000317564" description="Ubiquitin carboxyl-terminal hydrolase MINDY-3">
    <location>
        <begin position="1"/>
        <end position="441"/>
    </location>
</feature>
<feature type="active site" description="Nucleophile" evidence="1">
    <location>
        <position position="51"/>
    </location>
</feature>
<feature type="active site" description="Proton acceptor" evidence="1">
    <location>
        <position position="284"/>
    </location>
</feature>
<protein>
    <recommendedName>
        <fullName>Ubiquitin carboxyl-terminal hydrolase MINDY-3</fullName>
        <ecNumber>3.4.19.12</ecNumber>
    </recommendedName>
    <alternativeName>
        <fullName>Deubiquitinating enzyme MINDY-3</fullName>
    </alternativeName>
    <alternativeName>
        <fullName>Protein CARP</fullName>
    </alternativeName>
</protein>
<proteinExistence type="evidence at transcript level"/>
<dbReference type="EC" id="3.4.19.12"/>
<dbReference type="EMBL" id="BC067311">
    <property type="protein sequence ID" value="AAH67311.1"/>
    <property type="molecule type" value="mRNA"/>
</dbReference>
<dbReference type="RefSeq" id="NP_001001204.1">
    <property type="nucleotide sequence ID" value="NM_001001204.1"/>
</dbReference>
<dbReference type="RefSeq" id="XP_017950090.1">
    <property type="nucleotide sequence ID" value="XM_018094601.2"/>
</dbReference>
<dbReference type="RefSeq" id="XP_031759162.1">
    <property type="nucleotide sequence ID" value="XM_031903302.1"/>
</dbReference>
<dbReference type="FunCoup" id="Q6NX27">
    <property type="interactions" value="3045"/>
</dbReference>
<dbReference type="STRING" id="8364.ENSXETP00000021861"/>
<dbReference type="PaxDb" id="8364-ENSXETP00000062860"/>
<dbReference type="DNASU" id="407862"/>
<dbReference type="GeneID" id="407862"/>
<dbReference type="KEGG" id="xtr:407862"/>
<dbReference type="AGR" id="Xenbase:XB-GENE-957056"/>
<dbReference type="CTD" id="80013"/>
<dbReference type="Xenbase" id="XB-GENE-957056">
    <property type="gene designation" value="mindy3"/>
</dbReference>
<dbReference type="eggNOG" id="KOG2871">
    <property type="taxonomic scope" value="Eukaryota"/>
</dbReference>
<dbReference type="InParanoid" id="Q6NX27"/>
<dbReference type="OMA" id="VLQTKWP"/>
<dbReference type="OrthoDB" id="9981542at2759"/>
<dbReference type="Proteomes" id="UP000008143">
    <property type="component" value="Chromosome 6"/>
</dbReference>
<dbReference type="Bgee" id="ENSXETG00000020297">
    <property type="expression patterns" value="Expressed in brain and 12 other cell types or tissues"/>
</dbReference>
<dbReference type="GO" id="GO:0005634">
    <property type="term" value="C:nucleus"/>
    <property type="evidence" value="ECO:0007669"/>
    <property type="project" value="UniProtKB-SubCell"/>
</dbReference>
<dbReference type="GO" id="GO:0004843">
    <property type="term" value="F:cysteine-type deubiquitinase activity"/>
    <property type="evidence" value="ECO:0007669"/>
    <property type="project" value="UniProtKB-EC"/>
</dbReference>
<dbReference type="GO" id="GO:1990380">
    <property type="term" value="F:K48-linked deubiquitinase activity"/>
    <property type="evidence" value="ECO:0007669"/>
    <property type="project" value="InterPro"/>
</dbReference>
<dbReference type="GO" id="GO:0006915">
    <property type="term" value="P:apoptotic process"/>
    <property type="evidence" value="ECO:0007669"/>
    <property type="project" value="UniProtKB-KW"/>
</dbReference>
<dbReference type="GO" id="GO:0071108">
    <property type="term" value="P:protein K48-linked deubiquitination"/>
    <property type="evidence" value="ECO:0007669"/>
    <property type="project" value="InterPro"/>
</dbReference>
<dbReference type="GO" id="GO:0006508">
    <property type="term" value="P:proteolysis"/>
    <property type="evidence" value="ECO:0007669"/>
    <property type="project" value="UniProtKB-KW"/>
</dbReference>
<dbReference type="FunFam" id="1.10.238.10:FF:000315">
    <property type="entry name" value="Ubiquitin carboxyl-terminal hydrolase MINDY-3"/>
    <property type="match status" value="1"/>
</dbReference>
<dbReference type="InterPro" id="IPR011992">
    <property type="entry name" value="EF-hand-dom_pair"/>
</dbReference>
<dbReference type="InterPro" id="IPR025257">
    <property type="entry name" value="MINDY-3/4_CD"/>
</dbReference>
<dbReference type="InterPro" id="IPR039785">
    <property type="entry name" value="MINY3/4"/>
</dbReference>
<dbReference type="PANTHER" id="PTHR12473:SF17">
    <property type="entry name" value="UBIQUITIN CARBOXYL-TERMINAL HYDROLASE MINDY-3"/>
    <property type="match status" value="1"/>
</dbReference>
<dbReference type="PANTHER" id="PTHR12473">
    <property type="entry name" value="UBIQUITIN CARBOXYL-TERMINAL HYDROLASE MINDY-4-RELATED"/>
    <property type="match status" value="1"/>
</dbReference>
<dbReference type="Pfam" id="PF13898">
    <property type="entry name" value="MINDY-3_4_CD"/>
    <property type="match status" value="1"/>
</dbReference>
<dbReference type="SMART" id="SM01174">
    <property type="entry name" value="DUF4205"/>
    <property type="match status" value="1"/>
</dbReference>
<dbReference type="SUPFAM" id="SSF47473">
    <property type="entry name" value="EF-hand"/>
    <property type="match status" value="1"/>
</dbReference>
<organism>
    <name type="scientific">Xenopus tropicalis</name>
    <name type="common">Western clawed frog</name>
    <name type="synonym">Silurana tropicalis</name>
    <dbReference type="NCBI Taxonomy" id="8364"/>
    <lineage>
        <taxon>Eukaryota</taxon>
        <taxon>Metazoa</taxon>
        <taxon>Chordata</taxon>
        <taxon>Craniata</taxon>
        <taxon>Vertebrata</taxon>
        <taxon>Euteleostomi</taxon>
        <taxon>Amphibia</taxon>
        <taxon>Batrachia</taxon>
        <taxon>Anura</taxon>
        <taxon>Pipoidea</taxon>
        <taxon>Pipidae</taxon>
        <taxon>Xenopodinae</taxon>
        <taxon>Xenopus</taxon>
        <taxon>Silurana</taxon>
    </lineage>
</organism>
<comment type="function">
    <text evidence="2">Hydrolase that can remove 'Lys-48'-linked conjugated ubiquitin from proteins.</text>
</comment>
<comment type="catalytic activity">
    <reaction evidence="2">
        <text>Thiol-dependent hydrolysis of ester, thioester, amide, peptide and isopeptide bonds formed by the C-terminal Gly of ubiquitin (a 76-residue protein attached to proteins as an intracellular targeting signal).</text>
        <dbReference type="EC" id="3.4.19.12"/>
    </reaction>
</comment>
<comment type="subcellular location">
    <subcellularLocation>
        <location evidence="2">Nucleus</location>
    </subcellularLocation>
</comment>
<comment type="similarity">
    <text evidence="3">Belongs to the MINDY deubiquitinase family. FAM188 subfamily.</text>
</comment>
<gene>
    <name type="primary">mindy3</name>
    <name type="synonym">carp</name>
    <name type="synonym">fam188a</name>
</gene>
<reference key="1">
    <citation type="submission" date="2004-03" db="EMBL/GenBank/DDBJ databases">
        <authorList>
            <consortium name="NIH - Xenopus Gene Collection (XGC) project"/>
        </authorList>
    </citation>
    <scope>NUCLEOTIDE SEQUENCE [LARGE SCALE MRNA]</scope>
    <source>
        <tissue>Embryo</tissue>
    </source>
</reference>
<name>MINY3_XENTR</name>
<sequence>MSECDKELVDMVWGRNNSNGLADSVFKRWTQGFVFSASEPTALEQFEGGPCAVLAPVQAFLLKRQLFNTEHSNWRSCQDEEQKEILCHTLSDILEIVSFNSNSYCLASWLKEKATRETEQENPAESSQQNEQPTALAAEELGFERFHASIQKRKFNSLSELKEAVLETYSTWRNKYGVLLFLYSVILTKGIENVKNEIEDAERPLIDPVYGHGSQSLINLLLTGHAVSNVWDGDRECSGMKLQGIHSHADVGFLTILESLRFCKVGSFLKSPKFPIWVIGSETHLTVFFTKEMALVAPEAPSEQARRVFETYDPEDNGFIPDAVLEDVMKALDLVSDTDYVNLMKTKLDPEGLGIILLGPFLLEFFPEQSSKVPESFTVYHYNGLRQSNHNEKVAYIEGTAVMGFEDPRLQTDDTPVKCCLQTKWPFVELLWSADRPPSLI</sequence>
<evidence type="ECO:0000250" key="1">
    <source>
        <dbReference type="UniProtKB" id="Q8N5J2"/>
    </source>
</evidence>
<evidence type="ECO:0000250" key="2">
    <source>
        <dbReference type="UniProtKB" id="Q9H8M7"/>
    </source>
</evidence>
<evidence type="ECO:0000305" key="3"/>